<protein>
    <recommendedName>
        <fullName>Armadillo repeat-containing X-linked protein 3</fullName>
    </recommendedName>
    <alternativeName>
        <fullName>ARM protein lost in epithelial cancers on chromosome X 3</fullName>
        <shortName>Protein ALEX3</shortName>
    </alternativeName>
</protein>
<organism>
    <name type="scientific">Homo sapiens</name>
    <name type="common">Human</name>
    <dbReference type="NCBI Taxonomy" id="9606"/>
    <lineage>
        <taxon>Eukaryota</taxon>
        <taxon>Metazoa</taxon>
        <taxon>Chordata</taxon>
        <taxon>Craniata</taxon>
        <taxon>Vertebrata</taxon>
        <taxon>Euteleostomi</taxon>
        <taxon>Mammalia</taxon>
        <taxon>Eutheria</taxon>
        <taxon>Euarchontoglires</taxon>
        <taxon>Primates</taxon>
        <taxon>Haplorrhini</taxon>
        <taxon>Catarrhini</taxon>
        <taxon>Hominidae</taxon>
        <taxon>Homo</taxon>
    </lineage>
</organism>
<accession>Q9UH62</accession>
<accession>Q53HC6</accession>
<accession>Q7LCF5</accession>
<accession>Q9NPE4</accession>
<dbReference type="EMBL" id="AB039669">
    <property type="protein sequence ID" value="BAA94602.1"/>
    <property type="molecule type" value="mRNA"/>
</dbReference>
<dbReference type="EMBL" id="AF211175">
    <property type="protein sequence ID" value="AAF24487.1"/>
    <property type="molecule type" value="mRNA"/>
</dbReference>
<dbReference type="EMBL" id="AF208859">
    <property type="protein sequence ID" value="AAF64273.1"/>
    <property type="molecule type" value="mRNA"/>
</dbReference>
<dbReference type="EMBL" id="AY359079">
    <property type="protein sequence ID" value="AAQ89438.1"/>
    <property type="molecule type" value="mRNA"/>
</dbReference>
<dbReference type="EMBL" id="AK222655">
    <property type="protein sequence ID" value="BAD96375.1"/>
    <property type="molecule type" value="mRNA"/>
</dbReference>
<dbReference type="EMBL" id="CR933656">
    <property type="protein sequence ID" value="CAI45955.1"/>
    <property type="molecule type" value="mRNA"/>
</dbReference>
<dbReference type="EMBL" id="AL121883">
    <property type="protein sequence ID" value="CAI42939.1"/>
    <property type="molecule type" value="Genomic_DNA"/>
</dbReference>
<dbReference type="EMBL" id="BC005194">
    <property type="protein sequence ID" value="AAH05194.1"/>
    <property type="molecule type" value="mRNA"/>
</dbReference>
<dbReference type="CCDS" id="CCDS14489.1"/>
<dbReference type="RefSeq" id="NP_057691.1">
    <property type="nucleotide sequence ID" value="NM_016607.4"/>
</dbReference>
<dbReference type="RefSeq" id="NP_808816.1">
    <property type="nucleotide sequence ID" value="NM_177947.3"/>
</dbReference>
<dbReference type="RefSeq" id="NP_808817.1">
    <property type="nucleotide sequence ID" value="NM_177948.3"/>
</dbReference>
<dbReference type="RefSeq" id="XP_005262198.1">
    <property type="nucleotide sequence ID" value="XM_005262141.4"/>
</dbReference>
<dbReference type="RefSeq" id="XP_054183155.1">
    <property type="nucleotide sequence ID" value="XM_054327180.1"/>
</dbReference>
<dbReference type="SMR" id="Q9UH62"/>
<dbReference type="BioGRID" id="119614">
    <property type="interactions" value="138"/>
</dbReference>
<dbReference type="FunCoup" id="Q9UH62">
    <property type="interactions" value="527"/>
</dbReference>
<dbReference type="IntAct" id="Q9UH62">
    <property type="interactions" value="47"/>
</dbReference>
<dbReference type="MINT" id="Q9UH62"/>
<dbReference type="STRING" id="9606.ENSP00000340672"/>
<dbReference type="GlyGen" id="Q9UH62">
    <property type="glycosylation" value="2 sites, 1 N-linked glycan (1 site), 1 O-linked glycan (1 site)"/>
</dbReference>
<dbReference type="iPTMnet" id="Q9UH62"/>
<dbReference type="MetOSite" id="Q9UH62"/>
<dbReference type="PhosphoSitePlus" id="Q9UH62"/>
<dbReference type="SwissPalm" id="Q9UH62"/>
<dbReference type="BioMuta" id="ARMCX3"/>
<dbReference type="DMDM" id="74753322"/>
<dbReference type="jPOST" id="Q9UH62"/>
<dbReference type="MassIVE" id="Q9UH62"/>
<dbReference type="PaxDb" id="9606-ENSP00000340672"/>
<dbReference type="PeptideAtlas" id="Q9UH62"/>
<dbReference type="ProteomicsDB" id="84277"/>
<dbReference type="Pumba" id="Q9UH62"/>
<dbReference type="Antibodypedia" id="378">
    <property type="antibodies" value="242 antibodies from 29 providers"/>
</dbReference>
<dbReference type="DNASU" id="51566"/>
<dbReference type="Ensembl" id="ENST00000341189.8">
    <property type="protein sequence ID" value="ENSP00000340672.4"/>
    <property type="gene ID" value="ENSG00000102401.20"/>
</dbReference>
<dbReference type="Ensembl" id="ENST00000471229.7">
    <property type="protein sequence ID" value="ENSP00000454483.1"/>
    <property type="gene ID" value="ENSG00000102401.20"/>
</dbReference>
<dbReference type="Ensembl" id="ENST00000537169.1">
    <property type="protein sequence ID" value="ENSP00000439032.1"/>
    <property type="gene ID" value="ENSG00000102401.20"/>
</dbReference>
<dbReference type="GeneID" id="51566"/>
<dbReference type="KEGG" id="hsa:51566"/>
<dbReference type="MANE-Select" id="ENST00000471229.7">
    <property type="protein sequence ID" value="ENSP00000454483.1"/>
    <property type="RefSeq nucleotide sequence ID" value="NM_177947.3"/>
    <property type="RefSeq protein sequence ID" value="NP_808816.1"/>
</dbReference>
<dbReference type="UCSC" id="uc004ehz.2">
    <property type="organism name" value="human"/>
</dbReference>
<dbReference type="AGR" id="HGNC:24065"/>
<dbReference type="CTD" id="51566"/>
<dbReference type="DisGeNET" id="51566"/>
<dbReference type="GeneCards" id="ARMCX3"/>
<dbReference type="HGNC" id="HGNC:24065">
    <property type="gene designation" value="ARMCX3"/>
</dbReference>
<dbReference type="HPA" id="ENSG00000102401">
    <property type="expression patterns" value="Low tissue specificity"/>
</dbReference>
<dbReference type="MIM" id="300364">
    <property type="type" value="gene"/>
</dbReference>
<dbReference type="neXtProt" id="NX_Q9UH62"/>
<dbReference type="OpenTargets" id="ENSG00000102401"/>
<dbReference type="PharmGKB" id="PA134977725"/>
<dbReference type="VEuPathDB" id="HostDB:ENSG00000102401"/>
<dbReference type="eggNOG" id="ENOG502TCDI">
    <property type="taxonomic scope" value="Eukaryota"/>
</dbReference>
<dbReference type="GeneTree" id="ENSGT00940000162753"/>
<dbReference type="HOGENOM" id="CLU_037187_0_0_1"/>
<dbReference type="InParanoid" id="Q9UH62"/>
<dbReference type="OMA" id="DSKSIVW"/>
<dbReference type="OrthoDB" id="10017790at2759"/>
<dbReference type="PAN-GO" id="Q9UH62">
    <property type="GO annotations" value="2 GO annotations based on evolutionary models"/>
</dbReference>
<dbReference type="PhylomeDB" id="Q9UH62"/>
<dbReference type="TreeFam" id="TF335652"/>
<dbReference type="PathwayCommons" id="Q9UH62"/>
<dbReference type="Reactome" id="R-HSA-9013404">
    <property type="pathway name" value="RAC2 GTPase cycle"/>
</dbReference>
<dbReference type="SignaLink" id="Q9UH62"/>
<dbReference type="BioGRID-ORCS" id="51566">
    <property type="hits" value="11 hits in 775 CRISPR screens"/>
</dbReference>
<dbReference type="ChiTaRS" id="ARMCX3">
    <property type="organism name" value="human"/>
</dbReference>
<dbReference type="GeneWiki" id="ARMCX3"/>
<dbReference type="GenomeRNAi" id="51566"/>
<dbReference type="Pharos" id="Q9UH62">
    <property type="development level" value="Tbio"/>
</dbReference>
<dbReference type="PRO" id="PR:Q9UH62"/>
<dbReference type="Proteomes" id="UP000005640">
    <property type="component" value="Chromosome X"/>
</dbReference>
<dbReference type="RNAct" id="Q9UH62">
    <property type="molecule type" value="protein"/>
</dbReference>
<dbReference type="Bgee" id="ENSG00000102401">
    <property type="expression patterns" value="Expressed in lateral nuclear group of thalamus and 206 other cell types or tissues"/>
</dbReference>
<dbReference type="ExpressionAtlas" id="Q9UH62">
    <property type="expression patterns" value="baseline and differential"/>
</dbReference>
<dbReference type="GO" id="GO:1904115">
    <property type="term" value="C:axon cytoplasm"/>
    <property type="evidence" value="ECO:0007669"/>
    <property type="project" value="GOC"/>
</dbReference>
<dbReference type="GO" id="GO:0005829">
    <property type="term" value="C:cytosol"/>
    <property type="evidence" value="ECO:0007669"/>
    <property type="project" value="Ensembl"/>
</dbReference>
<dbReference type="GO" id="GO:0005741">
    <property type="term" value="C:mitochondrial outer membrane"/>
    <property type="evidence" value="ECO:0007669"/>
    <property type="project" value="UniProtKB-SubCell"/>
</dbReference>
<dbReference type="GO" id="GO:0005739">
    <property type="term" value="C:mitochondrion"/>
    <property type="evidence" value="ECO:0006056"/>
    <property type="project" value="FlyBase"/>
</dbReference>
<dbReference type="GO" id="GO:0005634">
    <property type="term" value="C:nucleus"/>
    <property type="evidence" value="ECO:0007669"/>
    <property type="project" value="UniProtKB-SubCell"/>
</dbReference>
<dbReference type="GO" id="GO:0019896">
    <property type="term" value="P:axonal transport of mitochondrion"/>
    <property type="evidence" value="ECO:0007669"/>
    <property type="project" value="Ensembl"/>
</dbReference>
<dbReference type="GO" id="GO:0007005">
    <property type="term" value="P:mitochondrion organization"/>
    <property type="evidence" value="ECO:0007669"/>
    <property type="project" value="Ensembl"/>
</dbReference>
<dbReference type="GO" id="GO:0045944">
    <property type="term" value="P:positive regulation of transcription by RNA polymerase II"/>
    <property type="evidence" value="ECO:0007669"/>
    <property type="project" value="Ensembl"/>
</dbReference>
<dbReference type="GO" id="GO:0008104">
    <property type="term" value="P:protein localization"/>
    <property type="evidence" value="ECO:0007669"/>
    <property type="project" value="Ensembl"/>
</dbReference>
<dbReference type="FunFam" id="1.25.10.10:FF:000846">
    <property type="entry name" value="Armadillo repeat-containing X-linked protein 3"/>
    <property type="match status" value="1"/>
</dbReference>
<dbReference type="Gene3D" id="1.25.10.10">
    <property type="entry name" value="Leucine-rich Repeat Variant"/>
    <property type="match status" value="2"/>
</dbReference>
<dbReference type="InterPro" id="IPR011989">
    <property type="entry name" value="ARM-like"/>
</dbReference>
<dbReference type="InterPro" id="IPR006911">
    <property type="entry name" value="ARM-rpt_dom"/>
</dbReference>
<dbReference type="InterPro" id="IPR016024">
    <property type="entry name" value="ARM-type_fold"/>
</dbReference>
<dbReference type="InterPro" id="IPR000225">
    <property type="entry name" value="Armadillo"/>
</dbReference>
<dbReference type="InterPro" id="IPR051303">
    <property type="entry name" value="Armcx_regulator"/>
</dbReference>
<dbReference type="PANTHER" id="PTHR15712">
    <property type="entry name" value="ARMADILLO REPEAT CONTAINING PROTEIN"/>
    <property type="match status" value="1"/>
</dbReference>
<dbReference type="PANTHER" id="PTHR15712:SF8">
    <property type="entry name" value="ARMADILLO REPEAT-CONTAINING X-LINKED PROTEIN 3"/>
    <property type="match status" value="1"/>
</dbReference>
<dbReference type="Pfam" id="PF04826">
    <property type="entry name" value="Arm_2"/>
    <property type="match status" value="1"/>
</dbReference>
<dbReference type="SUPFAM" id="SSF48371">
    <property type="entry name" value="ARM repeat"/>
    <property type="match status" value="1"/>
</dbReference>
<dbReference type="PROSITE" id="PS50176">
    <property type="entry name" value="ARM_REPEAT"/>
    <property type="match status" value="1"/>
</dbReference>
<evidence type="ECO:0000250" key="1">
    <source>
        <dbReference type="UniProtKB" id="Q8BHS6"/>
    </source>
</evidence>
<evidence type="ECO:0000255" key="2"/>
<evidence type="ECO:0000256" key="3">
    <source>
        <dbReference type="SAM" id="MobiDB-lite"/>
    </source>
</evidence>
<evidence type="ECO:0000305" key="4"/>
<evidence type="ECO:0007744" key="5">
    <source>
    </source>
</evidence>
<evidence type="ECO:0007744" key="6">
    <source>
    </source>
</evidence>
<evidence type="ECO:0007744" key="7">
    <source>
    </source>
</evidence>
<evidence type="ECO:0007744" key="8">
    <source>
    </source>
</evidence>
<evidence type="ECO:0007744" key="9">
    <source>
    </source>
</evidence>
<reference key="1">
    <citation type="journal article" date="2001" name="Biochem. Biophys. Res. Commun.">
        <title>ALEX1, a novel human armadillo repeat protein that is expressed differentially in normal tissues and carcinomas.</title>
        <authorList>
            <person name="Kurochkin I.V."/>
            <person name="Yonemitsu N."/>
            <person name="Funahashi S."/>
            <person name="Nomura H."/>
        </authorList>
    </citation>
    <scope>NUCLEOTIDE SEQUENCE [MRNA]</scope>
    <source>
        <tissue>Testis</tissue>
    </source>
</reference>
<reference key="2">
    <citation type="submission" date="1999-12" db="EMBL/GenBank/DDBJ databases">
        <title>Identification of a new protein as a putative binding partner of SH3 domain of non-erythroid alpha-spectrin (alpha-fodrin).</title>
        <authorList>
            <person name="Nicolas G."/>
            <person name="Galand C."/>
            <person name="Lecomte M.-C."/>
        </authorList>
    </citation>
    <scope>NUCLEOTIDE SEQUENCE [MRNA]</scope>
    <source>
        <tissue>Kidney</tissue>
    </source>
</reference>
<reference key="3">
    <citation type="journal article" date="2000" name="Genome Res.">
        <title>Cloning and functional analysis of cDNAs with open reading frames for 300 previously undefined genes expressed in CD34+ hematopoietic stem/progenitor cells.</title>
        <authorList>
            <person name="Zhang Q.-H."/>
            <person name="Ye M."/>
            <person name="Wu X.-Y."/>
            <person name="Ren S.-X."/>
            <person name="Zhao M."/>
            <person name="Zhao C.-J."/>
            <person name="Fu G."/>
            <person name="Shen Y."/>
            <person name="Fan H.-Y."/>
            <person name="Lu G."/>
            <person name="Zhong M."/>
            <person name="Xu X.-R."/>
            <person name="Han Z.-G."/>
            <person name="Zhang J.-W."/>
            <person name="Tao J."/>
            <person name="Huang Q.-H."/>
            <person name="Zhou J."/>
            <person name="Hu G.-X."/>
            <person name="Gu J."/>
            <person name="Chen S.-J."/>
            <person name="Chen Z."/>
        </authorList>
    </citation>
    <scope>NUCLEOTIDE SEQUENCE [LARGE SCALE MRNA]</scope>
    <source>
        <tissue>Bone marrow</tissue>
    </source>
</reference>
<reference key="4">
    <citation type="journal article" date="2003" name="Genome Res.">
        <title>The secreted protein discovery initiative (SPDI), a large-scale effort to identify novel human secreted and transmembrane proteins: a bioinformatics assessment.</title>
        <authorList>
            <person name="Clark H.F."/>
            <person name="Gurney A.L."/>
            <person name="Abaya E."/>
            <person name="Baker K."/>
            <person name="Baldwin D.T."/>
            <person name="Brush J."/>
            <person name="Chen J."/>
            <person name="Chow B."/>
            <person name="Chui C."/>
            <person name="Crowley C."/>
            <person name="Currell B."/>
            <person name="Deuel B."/>
            <person name="Dowd P."/>
            <person name="Eaton D."/>
            <person name="Foster J.S."/>
            <person name="Grimaldi C."/>
            <person name="Gu Q."/>
            <person name="Hass P.E."/>
            <person name="Heldens S."/>
            <person name="Huang A."/>
            <person name="Kim H.S."/>
            <person name="Klimowski L."/>
            <person name="Jin Y."/>
            <person name="Johnson S."/>
            <person name="Lee J."/>
            <person name="Lewis L."/>
            <person name="Liao D."/>
            <person name="Mark M.R."/>
            <person name="Robbie E."/>
            <person name="Sanchez C."/>
            <person name="Schoenfeld J."/>
            <person name="Seshagiri S."/>
            <person name="Simmons L."/>
            <person name="Singh J."/>
            <person name="Smith V."/>
            <person name="Stinson J."/>
            <person name="Vagts A."/>
            <person name="Vandlen R.L."/>
            <person name="Watanabe C."/>
            <person name="Wieand D."/>
            <person name="Woods K."/>
            <person name="Xie M.-H."/>
            <person name="Yansura D.G."/>
            <person name="Yi S."/>
            <person name="Yu G."/>
            <person name="Yuan J."/>
            <person name="Zhang M."/>
            <person name="Zhang Z."/>
            <person name="Goddard A.D."/>
            <person name="Wood W.I."/>
            <person name="Godowski P.J."/>
            <person name="Gray A.M."/>
        </authorList>
    </citation>
    <scope>NUCLEOTIDE SEQUENCE [LARGE SCALE MRNA]</scope>
</reference>
<reference key="5">
    <citation type="submission" date="2005-04" db="EMBL/GenBank/DDBJ databases">
        <authorList>
            <person name="Suzuki Y."/>
            <person name="Sugano S."/>
            <person name="Totoki Y."/>
            <person name="Toyoda A."/>
            <person name="Takeda T."/>
            <person name="Sakaki Y."/>
            <person name="Tanaka A."/>
            <person name="Yokoyama S."/>
        </authorList>
    </citation>
    <scope>NUCLEOTIDE SEQUENCE [LARGE SCALE MRNA]</scope>
    <source>
        <tissue>Brain</tissue>
    </source>
</reference>
<reference key="6">
    <citation type="journal article" date="2007" name="BMC Genomics">
        <title>The full-ORF clone resource of the German cDNA consortium.</title>
        <authorList>
            <person name="Bechtel S."/>
            <person name="Rosenfelder H."/>
            <person name="Duda A."/>
            <person name="Schmidt C.P."/>
            <person name="Ernst U."/>
            <person name="Wellenreuther R."/>
            <person name="Mehrle A."/>
            <person name="Schuster C."/>
            <person name="Bahr A."/>
            <person name="Bloecker H."/>
            <person name="Heubner D."/>
            <person name="Hoerlein A."/>
            <person name="Michel G."/>
            <person name="Wedler H."/>
            <person name="Koehrer K."/>
            <person name="Ottenwaelder B."/>
            <person name="Poustka A."/>
            <person name="Wiemann S."/>
            <person name="Schupp I."/>
        </authorList>
    </citation>
    <scope>NUCLEOTIDE SEQUENCE [LARGE SCALE MRNA]</scope>
    <source>
        <tissue>Retina</tissue>
    </source>
</reference>
<reference key="7">
    <citation type="journal article" date="2005" name="Nature">
        <title>The DNA sequence of the human X chromosome.</title>
        <authorList>
            <person name="Ross M.T."/>
            <person name="Grafham D.V."/>
            <person name="Coffey A.J."/>
            <person name="Scherer S."/>
            <person name="McLay K."/>
            <person name="Muzny D."/>
            <person name="Platzer M."/>
            <person name="Howell G.R."/>
            <person name="Burrows C."/>
            <person name="Bird C.P."/>
            <person name="Frankish A."/>
            <person name="Lovell F.L."/>
            <person name="Howe K.L."/>
            <person name="Ashurst J.L."/>
            <person name="Fulton R.S."/>
            <person name="Sudbrak R."/>
            <person name="Wen G."/>
            <person name="Jones M.C."/>
            <person name="Hurles M.E."/>
            <person name="Andrews T.D."/>
            <person name="Scott C.E."/>
            <person name="Searle S."/>
            <person name="Ramser J."/>
            <person name="Whittaker A."/>
            <person name="Deadman R."/>
            <person name="Carter N.P."/>
            <person name="Hunt S.E."/>
            <person name="Chen R."/>
            <person name="Cree A."/>
            <person name="Gunaratne P."/>
            <person name="Havlak P."/>
            <person name="Hodgson A."/>
            <person name="Metzker M.L."/>
            <person name="Richards S."/>
            <person name="Scott G."/>
            <person name="Steffen D."/>
            <person name="Sodergren E."/>
            <person name="Wheeler D.A."/>
            <person name="Worley K.C."/>
            <person name="Ainscough R."/>
            <person name="Ambrose K.D."/>
            <person name="Ansari-Lari M.A."/>
            <person name="Aradhya S."/>
            <person name="Ashwell R.I."/>
            <person name="Babbage A.K."/>
            <person name="Bagguley C.L."/>
            <person name="Ballabio A."/>
            <person name="Banerjee R."/>
            <person name="Barker G.E."/>
            <person name="Barlow K.F."/>
            <person name="Barrett I.P."/>
            <person name="Bates K.N."/>
            <person name="Beare D.M."/>
            <person name="Beasley H."/>
            <person name="Beasley O."/>
            <person name="Beck A."/>
            <person name="Bethel G."/>
            <person name="Blechschmidt K."/>
            <person name="Brady N."/>
            <person name="Bray-Allen S."/>
            <person name="Bridgeman A.M."/>
            <person name="Brown A.J."/>
            <person name="Brown M.J."/>
            <person name="Bonnin D."/>
            <person name="Bruford E.A."/>
            <person name="Buhay C."/>
            <person name="Burch P."/>
            <person name="Burford D."/>
            <person name="Burgess J."/>
            <person name="Burrill W."/>
            <person name="Burton J."/>
            <person name="Bye J.M."/>
            <person name="Carder C."/>
            <person name="Carrel L."/>
            <person name="Chako J."/>
            <person name="Chapman J.C."/>
            <person name="Chavez D."/>
            <person name="Chen E."/>
            <person name="Chen G."/>
            <person name="Chen Y."/>
            <person name="Chen Z."/>
            <person name="Chinault C."/>
            <person name="Ciccodicola A."/>
            <person name="Clark S.Y."/>
            <person name="Clarke G."/>
            <person name="Clee C.M."/>
            <person name="Clegg S."/>
            <person name="Clerc-Blankenburg K."/>
            <person name="Clifford K."/>
            <person name="Cobley V."/>
            <person name="Cole C.G."/>
            <person name="Conquer J.S."/>
            <person name="Corby N."/>
            <person name="Connor R.E."/>
            <person name="David R."/>
            <person name="Davies J."/>
            <person name="Davis C."/>
            <person name="Davis J."/>
            <person name="Delgado O."/>
            <person name="Deshazo D."/>
            <person name="Dhami P."/>
            <person name="Ding Y."/>
            <person name="Dinh H."/>
            <person name="Dodsworth S."/>
            <person name="Draper H."/>
            <person name="Dugan-Rocha S."/>
            <person name="Dunham A."/>
            <person name="Dunn M."/>
            <person name="Durbin K.J."/>
            <person name="Dutta I."/>
            <person name="Eades T."/>
            <person name="Ellwood M."/>
            <person name="Emery-Cohen A."/>
            <person name="Errington H."/>
            <person name="Evans K.L."/>
            <person name="Faulkner L."/>
            <person name="Francis F."/>
            <person name="Frankland J."/>
            <person name="Fraser A.E."/>
            <person name="Galgoczy P."/>
            <person name="Gilbert J."/>
            <person name="Gill R."/>
            <person name="Gloeckner G."/>
            <person name="Gregory S.G."/>
            <person name="Gribble S."/>
            <person name="Griffiths C."/>
            <person name="Grocock R."/>
            <person name="Gu Y."/>
            <person name="Gwilliam R."/>
            <person name="Hamilton C."/>
            <person name="Hart E.A."/>
            <person name="Hawes A."/>
            <person name="Heath P.D."/>
            <person name="Heitmann K."/>
            <person name="Hennig S."/>
            <person name="Hernandez J."/>
            <person name="Hinzmann B."/>
            <person name="Ho S."/>
            <person name="Hoffs M."/>
            <person name="Howden P.J."/>
            <person name="Huckle E.J."/>
            <person name="Hume J."/>
            <person name="Hunt P.J."/>
            <person name="Hunt A.R."/>
            <person name="Isherwood J."/>
            <person name="Jacob L."/>
            <person name="Johnson D."/>
            <person name="Jones S."/>
            <person name="de Jong P.J."/>
            <person name="Joseph S.S."/>
            <person name="Keenan S."/>
            <person name="Kelly S."/>
            <person name="Kershaw J.K."/>
            <person name="Khan Z."/>
            <person name="Kioschis P."/>
            <person name="Klages S."/>
            <person name="Knights A.J."/>
            <person name="Kosiura A."/>
            <person name="Kovar-Smith C."/>
            <person name="Laird G.K."/>
            <person name="Langford C."/>
            <person name="Lawlor S."/>
            <person name="Leversha M."/>
            <person name="Lewis L."/>
            <person name="Liu W."/>
            <person name="Lloyd C."/>
            <person name="Lloyd D.M."/>
            <person name="Loulseged H."/>
            <person name="Loveland J.E."/>
            <person name="Lovell J.D."/>
            <person name="Lozado R."/>
            <person name="Lu J."/>
            <person name="Lyne R."/>
            <person name="Ma J."/>
            <person name="Maheshwari M."/>
            <person name="Matthews L.H."/>
            <person name="McDowall J."/>
            <person name="McLaren S."/>
            <person name="McMurray A."/>
            <person name="Meidl P."/>
            <person name="Meitinger T."/>
            <person name="Milne S."/>
            <person name="Miner G."/>
            <person name="Mistry S.L."/>
            <person name="Morgan M."/>
            <person name="Morris S."/>
            <person name="Mueller I."/>
            <person name="Mullikin J.C."/>
            <person name="Nguyen N."/>
            <person name="Nordsiek G."/>
            <person name="Nyakatura G."/>
            <person name="O'dell C.N."/>
            <person name="Okwuonu G."/>
            <person name="Palmer S."/>
            <person name="Pandian R."/>
            <person name="Parker D."/>
            <person name="Parrish J."/>
            <person name="Pasternak S."/>
            <person name="Patel D."/>
            <person name="Pearce A.V."/>
            <person name="Pearson D.M."/>
            <person name="Pelan S.E."/>
            <person name="Perez L."/>
            <person name="Porter K.M."/>
            <person name="Ramsey Y."/>
            <person name="Reichwald K."/>
            <person name="Rhodes S."/>
            <person name="Ridler K.A."/>
            <person name="Schlessinger D."/>
            <person name="Schueler M.G."/>
            <person name="Sehra H.K."/>
            <person name="Shaw-Smith C."/>
            <person name="Shen H."/>
            <person name="Sheridan E.M."/>
            <person name="Shownkeen R."/>
            <person name="Skuce C.D."/>
            <person name="Smith M.L."/>
            <person name="Sotheran E.C."/>
            <person name="Steingruber H.E."/>
            <person name="Steward C.A."/>
            <person name="Storey R."/>
            <person name="Swann R.M."/>
            <person name="Swarbreck D."/>
            <person name="Tabor P.E."/>
            <person name="Taudien S."/>
            <person name="Taylor T."/>
            <person name="Teague B."/>
            <person name="Thomas K."/>
            <person name="Thorpe A."/>
            <person name="Timms K."/>
            <person name="Tracey A."/>
            <person name="Trevanion S."/>
            <person name="Tromans A.C."/>
            <person name="d'Urso M."/>
            <person name="Verduzco D."/>
            <person name="Villasana D."/>
            <person name="Waldron L."/>
            <person name="Wall M."/>
            <person name="Wang Q."/>
            <person name="Warren J."/>
            <person name="Warry G.L."/>
            <person name="Wei X."/>
            <person name="West A."/>
            <person name="Whitehead S.L."/>
            <person name="Whiteley M.N."/>
            <person name="Wilkinson J.E."/>
            <person name="Willey D.L."/>
            <person name="Williams G."/>
            <person name="Williams L."/>
            <person name="Williamson A."/>
            <person name="Williamson H."/>
            <person name="Wilming L."/>
            <person name="Woodmansey R.L."/>
            <person name="Wray P.W."/>
            <person name="Yen J."/>
            <person name="Zhang J."/>
            <person name="Zhou J."/>
            <person name="Zoghbi H."/>
            <person name="Zorilla S."/>
            <person name="Buck D."/>
            <person name="Reinhardt R."/>
            <person name="Poustka A."/>
            <person name="Rosenthal A."/>
            <person name="Lehrach H."/>
            <person name="Meindl A."/>
            <person name="Minx P.J."/>
            <person name="Hillier L.W."/>
            <person name="Willard H.F."/>
            <person name="Wilson R.K."/>
            <person name="Waterston R.H."/>
            <person name="Rice C.M."/>
            <person name="Vaudin M."/>
            <person name="Coulson A."/>
            <person name="Nelson D.L."/>
            <person name="Weinstock G."/>
            <person name="Sulston J.E."/>
            <person name="Durbin R.M."/>
            <person name="Hubbard T."/>
            <person name="Gibbs R.A."/>
            <person name="Beck S."/>
            <person name="Rogers J."/>
            <person name="Bentley D.R."/>
        </authorList>
    </citation>
    <scope>NUCLEOTIDE SEQUENCE [LARGE SCALE GENOMIC DNA]</scope>
</reference>
<reference key="8">
    <citation type="journal article" date="2004" name="Genome Res.">
        <title>The status, quality, and expansion of the NIH full-length cDNA project: the Mammalian Gene Collection (MGC).</title>
        <authorList>
            <consortium name="The MGC Project Team"/>
        </authorList>
    </citation>
    <scope>NUCLEOTIDE SEQUENCE [LARGE SCALE MRNA]</scope>
    <source>
        <tissue>Skin</tissue>
    </source>
</reference>
<reference key="9">
    <citation type="journal article" date="2006" name="Cell">
        <title>Global, in vivo, and site-specific phosphorylation dynamics in signaling networks.</title>
        <authorList>
            <person name="Olsen J.V."/>
            <person name="Blagoev B."/>
            <person name="Gnad F."/>
            <person name="Macek B."/>
            <person name="Kumar C."/>
            <person name="Mortensen P."/>
            <person name="Mann M."/>
        </authorList>
    </citation>
    <scope>PHOSPHORYLATION [LARGE SCALE ANALYSIS] AT SER-61 AND SER-67</scope>
    <scope>IDENTIFICATION BY MASS SPECTROMETRY [LARGE SCALE ANALYSIS]</scope>
    <source>
        <tissue>Cervix carcinoma</tissue>
    </source>
</reference>
<reference key="10">
    <citation type="journal article" date="2008" name="Proteomics">
        <title>Large-scale phosphoproteome analysis of human liver tissue by enrichment and fractionation of phosphopeptides with strong anion exchange chromatography.</title>
        <authorList>
            <person name="Han G."/>
            <person name="Ye M."/>
            <person name="Zhou H."/>
            <person name="Jiang X."/>
            <person name="Feng S."/>
            <person name="Jiang X."/>
            <person name="Tian R."/>
            <person name="Wan D."/>
            <person name="Zou H."/>
            <person name="Gu J."/>
        </authorList>
    </citation>
    <scope>PHOSPHORYLATION [LARGE SCALE ANALYSIS] AT SER-61</scope>
    <scope>IDENTIFICATION BY MASS SPECTROMETRY [LARGE SCALE ANALYSIS]</scope>
    <source>
        <tissue>Liver</tissue>
    </source>
</reference>
<reference key="11">
    <citation type="journal article" date="2009" name="Sci. Signal.">
        <title>Quantitative phosphoproteomic analysis of T cell receptor signaling reveals system-wide modulation of protein-protein interactions.</title>
        <authorList>
            <person name="Mayya V."/>
            <person name="Lundgren D.H."/>
            <person name="Hwang S.-I."/>
            <person name="Rezaul K."/>
            <person name="Wu L."/>
            <person name="Eng J.K."/>
            <person name="Rodionov V."/>
            <person name="Han D.K."/>
        </authorList>
    </citation>
    <scope>PHOSPHORYLATION [LARGE SCALE ANALYSIS] AT SER-61</scope>
    <scope>IDENTIFICATION BY MASS SPECTROMETRY [LARGE SCALE ANALYSIS]</scope>
    <source>
        <tissue>Leukemic T-cell</tissue>
    </source>
</reference>
<reference key="12">
    <citation type="journal article" date="2011" name="BMC Syst. Biol.">
        <title>Initial characterization of the human central proteome.</title>
        <authorList>
            <person name="Burkard T.R."/>
            <person name="Planyavsky M."/>
            <person name="Kaupe I."/>
            <person name="Breitwieser F.P."/>
            <person name="Buerckstuemmer T."/>
            <person name="Bennett K.L."/>
            <person name="Superti-Furga G."/>
            <person name="Colinge J."/>
        </authorList>
    </citation>
    <scope>IDENTIFICATION BY MASS SPECTROMETRY [LARGE SCALE ANALYSIS]</scope>
</reference>
<reference key="13">
    <citation type="journal article" date="2011" name="Sci. Signal.">
        <title>System-wide temporal characterization of the proteome and phosphoproteome of human embryonic stem cell differentiation.</title>
        <authorList>
            <person name="Rigbolt K.T."/>
            <person name="Prokhorova T.A."/>
            <person name="Akimov V."/>
            <person name="Henningsen J."/>
            <person name="Johansen P.T."/>
            <person name="Kratchmarova I."/>
            <person name="Kassem M."/>
            <person name="Mann M."/>
            <person name="Olsen J.V."/>
            <person name="Blagoev B."/>
        </authorList>
    </citation>
    <scope>PHOSPHORYLATION [LARGE SCALE ANALYSIS] AT SER-61</scope>
    <scope>IDENTIFICATION BY MASS SPECTROMETRY [LARGE SCALE ANALYSIS]</scope>
</reference>
<reference key="14">
    <citation type="journal article" date="2013" name="J. Proteome Res.">
        <title>Toward a comprehensive characterization of a human cancer cell phosphoproteome.</title>
        <authorList>
            <person name="Zhou H."/>
            <person name="Di Palma S."/>
            <person name="Preisinger C."/>
            <person name="Peng M."/>
            <person name="Polat A.N."/>
            <person name="Heck A.J."/>
            <person name="Mohammed S."/>
        </authorList>
    </citation>
    <scope>PHOSPHORYLATION [LARGE SCALE ANALYSIS] AT SER-61; SER-72 AND SER-110</scope>
    <scope>IDENTIFICATION BY MASS SPECTROMETRY [LARGE SCALE ANALYSIS]</scope>
    <source>
        <tissue>Cervix carcinoma</tissue>
        <tissue>Erythroleukemia</tissue>
    </source>
</reference>
<gene>
    <name type="primary">ARMCX3</name>
    <name type="synonym">ALEX3</name>
    <name type="ORF">BM-017</name>
    <name type="ORF">UNQ2517/PRO6007</name>
</gene>
<name>ARMX3_HUMAN</name>
<feature type="chain" id="PRO_0000191366" description="Armadillo repeat-containing X-linked protein 3">
    <location>
        <begin position="1"/>
        <end position="379"/>
    </location>
</feature>
<feature type="topological domain" description="Mitochondrial intermembrane" evidence="1">
    <location>
        <begin position="1"/>
        <end position="6"/>
    </location>
</feature>
<feature type="transmembrane region" description="Helical; Signal-anchor" evidence="2">
    <location>
        <begin position="7"/>
        <end position="29"/>
    </location>
</feature>
<feature type="topological domain" description="Cytoplasmic" evidence="1">
    <location>
        <begin position="30"/>
        <end position="379"/>
    </location>
</feature>
<feature type="repeat" description="ARM 1" evidence="2">
    <location>
        <begin position="111"/>
        <end position="151"/>
    </location>
</feature>
<feature type="repeat" description="ARM 2" evidence="2">
    <location>
        <begin position="153"/>
        <end position="192"/>
    </location>
</feature>
<feature type="repeat" description="ARM 3" evidence="2">
    <location>
        <begin position="233"/>
        <end position="272"/>
    </location>
</feature>
<feature type="region of interest" description="Mitochondrion outer membrane (MOM)-targeting sequence" evidence="4">
    <location>
        <begin position="1"/>
        <end position="6"/>
    </location>
</feature>
<feature type="region of interest" description="Mitochondrion outer membrane (MOM)-targeting sequence" evidence="4">
    <location>
        <begin position="26"/>
        <end position="37"/>
    </location>
</feature>
<feature type="region of interest" description="Nuclear localization signal" evidence="1">
    <location>
        <begin position="89"/>
        <end position="98"/>
    </location>
</feature>
<feature type="region of interest" description="Disordered" evidence="3">
    <location>
        <begin position="95"/>
        <end position="116"/>
    </location>
</feature>
<feature type="compositionally biased region" description="Basic residues" evidence="3">
    <location>
        <begin position="95"/>
        <end position="106"/>
    </location>
</feature>
<feature type="modified residue" description="Phosphoserine" evidence="5 6 7 8 9">
    <location>
        <position position="61"/>
    </location>
</feature>
<feature type="modified residue" description="Phosphoserine" evidence="5">
    <location>
        <position position="67"/>
    </location>
</feature>
<feature type="modified residue" description="Phosphoserine" evidence="9">
    <location>
        <position position="72"/>
    </location>
</feature>
<feature type="modified residue" description="Phosphoserine" evidence="9">
    <location>
        <position position="110"/>
    </location>
</feature>
<feature type="sequence conflict" description="In Ref. 5; BAD96375." evidence="4" ref="5">
    <original>E</original>
    <variation>V</variation>
    <location>
        <position position="310"/>
    </location>
</feature>
<proteinExistence type="evidence at protein level"/>
<sequence length="379" mass="42501">MGYARKVGWVTAGLVIGAGACYCIYRLTRGRKQNKEKMAEGGSGDVDDAGDCSGARYNDWSDDDDDSNESKSIVWYPPWARIGTEAGTRARARARARATRARRAVQKRASPNSDDTVLSPQELQKVLCLVEMSEKPYILEAALIALGNNAAYAFNRDIIRDLGGLPIVAKILNTRDPIVKEKALIVLNNLSVNAENQRRLKVYMNQVCDDTITSRLNSSVQLAGLRLLTNMTVTNEYQHMLANSISDFFRLFSAGNEETKLQVLKLLLNLAENPAMTRELLRAQVPSSLGSLFNKKENKEVILKLLVIFENINDNFKWEENEPTQNQFGEGSLFFFLKEFQVCADKVLGIESHHDFLVKVKVGKFMAKLAEHMFPKSQE</sequence>
<comment type="function">
    <text evidence="1">Regulates mitochondrial aggregation and transport in axons in living neurons. May link mitochondria to the TRAK2-kinesin motor complex via its interaction with Miro and TRAK2. Mitochondrial distribution and dynamics is regulated through ARMCX3 protein degradation, which is promoted by PCK and negatively regulated by WNT1. Enhances the SOX10-mediated transactivation of the neuronal acetylcholine receptor subunit alpha-3 and beta-4 subunit gene promoters.</text>
</comment>
<comment type="subunit">
    <text evidence="1">Interacts (via ARM domain) with MIRO1, MIRO2 and TRAK2. The interaction with Miro is calcium-dependent. Interacts with SOX10.</text>
</comment>
<comment type="interaction">
    <interactant intactId="EBI-717832">
        <id>Q9UH62</id>
    </interactant>
    <interactant intactId="EBI-2339219">
        <id>Q08426</id>
        <label>EHHADH</label>
    </interactant>
    <organismsDiffer>false</organismsDiffer>
    <experiments>3</experiments>
</comment>
<comment type="interaction">
    <interactant intactId="EBI-717832">
        <id>Q9UH62</id>
    </interactant>
    <interactant intactId="EBI-14240149">
        <id>B3EWG3</id>
        <label>FAM25A</label>
    </interactant>
    <organismsDiffer>false</organismsDiffer>
    <experiments>3</experiments>
</comment>
<comment type="interaction">
    <interactant intactId="EBI-717832">
        <id>Q9UH62</id>
    </interactant>
    <interactant intactId="EBI-720354">
        <id>Q9H063</id>
        <label>MAF1</label>
    </interactant>
    <organismsDiffer>false</organismsDiffer>
    <experiments>4</experiments>
</comment>
<comment type="subcellular location">
    <subcellularLocation>
        <location evidence="1">Mitochondrion outer membrane</location>
        <topology evidence="2">Single-pass membrane protein</topology>
    </subcellularLocation>
    <subcellularLocation>
        <location evidence="1">Cytoplasm</location>
    </subcellularLocation>
    <subcellularLocation>
        <location evidence="1">Nucleus</location>
    </subcellularLocation>
</comment>
<comment type="similarity">
    <text evidence="4">Belongs to the eutherian X-chromosome-specific Armcx family.</text>
</comment>
<comment type="online information" name="Atlas of Genetics and Cytogenetics in Oncology and Haematology">
    <link uri="https://atlasgeneticsoncology.org/gene/479/ALEX3Xq22"/>
</comment>
<keyword id="KW-0963">Cytoplasm</keyword>
<keyword id="KW-0472">Membrane</keyword>
<keyword id="KW-0496">Mitochondrion</keyword>
<keyword id="KW-1000">Mitochondrion outer membrane</keyword>
<keyword id="KW-0539">Nucleus</keyword>
<keyword id="KW-0597">Phosphoprotein</keyword>
<keyword id="KW-1267">Proteomics identification</keyword>
<keyword id="KW-1185">Reference proteome</keyword>
<keyword id="KW-0677">Repeat</keyword>
<keyword id="KW-0735">Signal-anchor</keyword>
<keyword id="KW-0812">Transmembrane</keyword>
<keyword id="KW-1133">Transmembrane helix</keyword>